<keyword id="KW-0002">3D-structure</keyword>
<keyword id="KW-0963">Cytoplasm</keyword>
<keyword id="KW-0378">Hydrolase</keyword>
<keyword id="KW-1185">Reference proteome</keyword>
<reference key="1">
    <citation type="journal article" date="2005" name="Infect. Immun.">
        <title>Whole-genome analyses of speciation events in pathogenic Brucellae.</title>
        <authorList>
            <person name="Chain P.S."/>
            <person name="Comerci D.J."/>
            <person name="Tolmasky M.E."/>
            <person name="Larimer F.W."/>
            <person name="Malfatti S.A."/>
            <person name="Vergez L.M."/>
            <person name="Aguero F."/>
            <person name="Land M.L."/>
            <person name="Ugalde R.A."/>
            <person name="Garcia E."/>
        </authorList>
    </citation>
    <scope>NUCLEOTIDE SEQUENCE [LARGE SCALE GENOMIC DNA]</scope>
    <source>
        <strain>2308</strain>
    </source>
</reference>
<reference key="2">
    <citation type="journal article" date="2007" name="Infect. Immun.">
        <title>Characterization of the urease operon of Brucella abortus and assessment of its role in virulence of the bacterium.</title>
        <authorList>
            <person name="Sangari F.J."/>
            <person name="Seoane A."/>
            <person name="Rodriguez M.C."/>
            <person name="Aguero J."/>
            <person name="Garcia Lobo J.M."/>
        </authorList>
    </citation>
    <scope>LACK OF ROLE IN VIRULENCE</scope>
</reference>
<name>URE32_BRUA2</name>
<gene>
    <name evidence="1" type="primary">ureA2</name>
    <name type="ordered locus">BAB1_1376</name>
</gene>
<comment type="function">
    <text>Disrupting the ure2 operon has no effect on urease activity or pathogen survival in BALB/c mice when administered orally.</text>
</comment>
<comment type="catalytic activity">
    <reaction evidence="1">
        <text>urea + 2 H2O + H(+) = hydrogencarbonate + 2 NH4(+)</text>
        <dbReference type="Rhea" id="RHEA:20557"/>
        <dbReference type="ChEBI" id="CHEBI:15377"/>
        <dbReference type="ChEBI" id="CHEBI:15378"/>
        <dbReference type="ChEBI" id="CHEBI:16199"/>
        <dbReference type="ChEBI" id="CHEBI:17544"/>
        <dbReference type="ChEBI" id="CHEBI:28938"/>
        <dbReference type="EC" id="3.5.1.5"/>
    </reaction>
</comment>
<comment type="pathway">
    <text evidence="1">Nitrogen metabolism; urea degradation; CO(2) and NH(3) from urea (urease route): step 1/1.</text>
</comment>
<comment type="subunit">
    <text evidence="1">Heterotrimer of UreA (gamma), UreB (beta) and UreC (alpha) subunits. Three heterotrimers associate to form the active enzyme.</text>
</comment>
<comment type="subcellular location">
    <subcellularLocation>
        <location evidence="1">Cytoplasm</location>
    </subcellularLocation>
</comment>
<comment type="similarity">
    <text evidence="1">Belongs to the urease gamma subunit family.</text>
</comment>
<dbReference type="EC" id="3.5.1.5" evidence="1"/>
<dbReference type="EMBL" id="AM040264">
    <property type="protein sequence ID" value="CAJ11332.1"/>
    <property type="molecule type" value="Genomic_DNA"/>
</dbReference>
<dbReference type="RefSeq" id="WP_002964469.1">
    <property type="nucleotide sequence ID" value="NZ_KN046823.1"/>
</dbReference>
<dbReference type="PDB" id="4FUR">
    <property type="method" value="X-ray"/>
    <property type="resolution" value="2.10 A"/>
    <property type="chains" value="A/B/C/D/E/F=1-100"/>
</dbReference>
<dbReference type="PDBsum" id="4FUR"/>
<dbReference type="SMR" id="Q2YQE0"/>
<dbReference type="STRING" id="359391.BAB1_1376"/>
<dbReference type="KEGG" id="bmf:BAB1_1376"/>
<dbReference type="PATRIC" id="fig|359391.11.peg.826"/>
<dbReference type="HOGENOM" id="CLU_145825_1_0_5"/>
<dbReference type="UniPathway" id="UPA00258">
    <property type="reaction ID" value="UER00370"/>
</dbReference>
<dbReference type="EvolutionaryTrace" id="Q2YQE0"/>
<dbReference type="Proteomes" id="UP000002719">
    <property type="component" value="Chromosome I"/>
</dbReference>
<dbReference type="GO" id="GO:0005737">
    <property type="term" value="C:cytoplasm"/>
    <property type="evidence" value="ECO:0007669"/>
    <property type="project" value="UniProtKB-SubCell"/>
</dbReference>
<dbReference type="GO" id="GO:0016151">
    <property type="term" value="F:nickel cation binding"/>
    <property type="evidence" value="ECO:0007669"/>
    <property type="project" value="InterPro"/>
</dbReference>
<dbReference type="GO" id="GO:0009039">
    <property type="term" value="F:urease activity"/>
    <property type="evidence" value="ECO:0007669"/>
    <property type="project" value="UniProtKB-UniRule"/>
</dbReference>
<dbReference type="GO" id="GO:0043419">
    <property type="term" value="P:urea catabolic process"/>
    <property type="evidence" value="ECO:0007669"/>
    <property type="project" value="UniProtKB-UniRule"/>
</dbReference>
<dbReference type="CDD" id="cd00390">
    <property type="entry name" value="Urease_gamma"/>
    <property type="match status" value="1"/>
</dbReference>
<dbReference type="Gene3D" id="3.30.280.10">
    <property type="entry name" value="Urease, gamma-like subunit"/>
    <property type="match status" value="1"/>
</dbReference>
<dbReference type="HAMAP" id="MF_00739">
    <property type="entry name" value="Urease_gamma"/>
    <property type="match status" value="1"/>
</dbReference>
<dbReference type="InterPro" id="IPR012010">
    <property type="entry name" value="Urease_gamma"/>
</dbReference>
<dbReference type="InterPro" id="IPR002026">
    <property type="entry name" value="Urease_gamma/gamma-beta_su"/>
</dbReference>
<dbReference type="InterPro" id="IPR036463">
    <property type="entry name" value="Urease_gamma_sf"/>
</dbReference>
<dbReference type="InterPro" id="IPR050069">
    <property type="entry name" value="Urease_subunit"/>
</dbReference>
<dbReference type="NCBIfam" id="NF009712">
    <property type="entry name" value="PRK13241.1"/>
    <property type="match status" value="1"/>
</dbReference>
<dbReference type="NCBIfam" id="TIGR00193">
    <property type="entry name" value="urease_gam"/>
    <property type="match status" value="1"/>
</dbReference>
<dbReference type="PANTHER" id="PTHR33569">
    <property type="entry name" value="UREASE"/>
    <property type="match status" value="1"/>
</dbReference>
<dbReference type="PANTHER" id="PTHR33569:SF1">
    <property type="entry name" value="UREASE"/>
    <property type="match status" value="1"/>
</dbReference>
<dbReference type="Pfam" id="PF00547">
    <property type="entry name" value="Urease_gamma"/>
    <property type="match status" value="1"/>
</dbReference>
<dbReference type="PIRSF" id="PIRSF001223">
    <property type="entry name" value="Urease_gamma"/>
    <property type="match status" value="1"/>
</dbReference>
<dbReference type="SUPFAM" id="SSF54111">
    <property type="entry name" value="Urease, gamma-subunit"/>
    <property type="match status" value="1"/>
</dbReference>
<accession>Q2YQE0</accession>
<feature type="chain" id="PRO_0000234200" description="Urease subunit gamma 2">
    <location>
        <begin position="1"/>
        <end position="100"/>
    </location>
</feature>
<feature type="helix" evidence="2">
    <location>
        <begin position="5"/>
        <end position="25"/>
    </location>
</feature>
<feature type="helix" evidence="2">
    <location>
        <begin position="32"/>
        <end position="48"/>
    </location>
</feature>
<feature type="helix" evidence="2">
    <location>
        <begin position="53"/>
        <end position="60"/>
    </location>
</feature>
<feature type="turn" evidence="2">
    <location>
        <begin position="61"/>
        <end position="63"/>
    </location>
</feature>
<feature type="helix" evidence="2">
    <location>
        <begin position="66"/>
        <end position="68"/>
    </location>
</feature>
<feature type="helix" evidence="2">
    <location>
        <begin position="73"/>
        <end position="76"/>
    </location>
</feature>
<feature type="strand" evidence="2">
    <location>
        <begin position="78"/>
        <end position="86"/>
    </location>
</feature>
<feature type="strand" evidence="2">
    <location>
        <begin position="89"/>
        <end position="97"/>
    </location>
</feature>
<organism>
    <name type="scientific">Brucella abortus (strain 2308)</name>
    <dbReference type="NCBI Taxonomy" id="359391"/>
    <lineage>
        <taxon>Bacteria</taxon>
        <taxon>Pseudomonadati</taxon>
        <taxon>Pseudomonadota</taxon>
        <taxon>Alphaproteobacteria</taxon>
        <taxon>Hyphomicrobiales</taxon>
        <taxon>Brucellaceae</taxon>
        <taxon>Brucella/Ochrobactrum group</taxon>
        <taxon>Brucella</taxon>
    </lineage>
</organism>
<protein>
    <recommendedName>
        <fullName evidence="1">Urease subunit gamma 2</fullName>
        <ecNumber evidence="1">3.5.1.5</ecNumber>
    </recommendedName>
    <alternativeName>
        <fullName evidence="1">Urea amidohydrolase subunit gamma 2</fullName>
    </alternativeName>
</protein>
<sequence length="100" mass="10943">MHLTPREFDKLVIHMLSDVALKRKNKGLKLNHPEAVAVLSAYVLDGAREGKTVEEVMDGARSVLKADDVMDGVPDLLPLIQVEAVFSDGSRLVSLHNPIT</sequence>
<proteinExistence type="evidence at protein level"/>
<evidence type="ECO:0000255" key="1">
    <source>
        <dbReference type="HAMAP-Rule" id="MF_00739"/>
    </source>
</evidence>
<evidence type="ECO:0007829" key="2">
    <source>
        <dbReference type="PDB" id="4FUR"/>
    </source>
</evidence>